<accession>O23344</accession>
<accession>Q8LD29</accession>
<evidence type="ECO:0000255" key="1"/>
<evidence type="ECO:0000255" key="2">
    <source>
        <dbReference type="PROSITE-ProRule" id="PRU00465"/>
    </source>
</evidence>
<evidence type="ECO:0000269" key="3">
    <source>
    </source>
</evidence>
<evidence type="ECO:0000303" key="4">
    <source>
    </source>
</evidence>
<evidence type="ECO:0000305" key="5"/>
<evidence type="ECO:0000312" key="6">
    <source>
        <dbReference type="Araport" id="AT4G14890"/>
    </source>
</evidence>
<evidence type="ECO:0000312" key="7">
    <source>
        <dbReference type="EMBL" id="CAB10268.1"/>
    </source>
</evidence>
<evidence type="ECO:0000312" key="8">
    <source>
        <dbReference type="EMBL" id="CAB78531.1"/>
    </source>
</evidence>
<comment type="function">
    <text evidence="3 5">Ferredoxins are iron-sulfur proteins that transfer electrons in a wide variety of metabolic reactions (Probable). Mediates alternative electron partitioning in conditions of acceptor limitation at photosystem I. Accepts electrons from photosystem I (PSI) and is capable of electron transfer with FNR, but cannot support photoreduction of NADP(+) (PubMed:20966083).</text>
</comment>
<comment type="cofactor">
    <cofactor evidence="2 3">
        <name>[2Fe-2S] cluster</name>
        <dbReference type="ChEBI" id="CHEBI:190135"/>
    </cofactor>
    <text evidence="2 3">Binds 1 [2Fe-2S] cluster.</text>
</comment>
<comment type="biophysicochemical properties">
    <redoxPotential>
        <text evidence="3">E(0) is -280 mV.</text>
    </redoxPotential>
</comment>
<comment type="subcellular location">
    <subcellularLocation>
        <location evidence="3">Plastid</location>
        <location evidence="3">Chloroplast</location>
    </subcellularLocation>
</comment>
<comment type="induction">
    <text evidence="3">Induced by high light at protein level, but not at transcript level. Strongly up-regulated in response to acceptor limitation at photosystem I (PSI) in plants lacking of photosynthetic [2Fe-2S] ferredoxin (Fd).</text>
</comment>
<comment type="similarity">
    <text evidence="5">Belongs to the 2Fe2S plant-type ferredoxin family.</text>
</comment>
<feature type="transit peptide" description="Chloroplast" evidence="1">
    <location>
        <begin position="1"/>
        <end position="56"/>
    </location>
</feature>
<feature type="chain" id="PRO_0000443798" description="Ferredoxin C 1, chloroplastic" evidence="1">
    <location>
        <begin position="57"/>
        <end position="154"/>
    </location>
</feature>
<feature type="domain" description="2Fe-2S ferredoxin-type" evidence="2">
    <location>
        <begin position="57"/>
        <end position="142"/>
    </location>
</feature>
<feature type="binding site" evidence="2">
    <location>
        <position position="89"/>
    </location>
    <ligand>
        <name>[2Fe-2S] cluster</name>
        <dbReference type="ChEBI" id="CHEBI:190135"/>
    </ligand>
</feature>
<feature type="binding site" evidence="2">
    <location>
        <position position="94"/>
    </location>
    <ligand>
        <name>[2Fe-2S] cluster</name>
        <dbReference type="ChEBI" id="CHEBI:190135"/>
    </ligand>
</feature>
<feature type="binding site" evidence="2">
    <location>
        <position position="97"/>
    </location>
    <ligand>
        <name>[2Fe-2S] cluster</name>
        <dbReference type="ChEBI" id="CHEBI:190135"/>
    </ligand>
</feature>
<feature type="binding site" evidence="2">
    <location>
        <position position="126"/>
    </location>
    <ligand>
        <name>[2Fe-2S] cluster</name>
        <dbReference type="ChEBI" id="CHEBI:190135"/>
    </ligand>
</feature>
<feature type="sequence conflict" description="In Ref. 5; AAM64315." evidence="5" ref="5">
    <original>L</original>
    <variation>P</variation>
    <location>
        <position position="15"/>
    </location>
</feature>
<feature type="sequence conflict" description="In Ref. 5; AAM64315." evidence="5" ref="5">
    <original>PLRNATLSTT</original>
    <variation>QVRNTALSTA</variation>
    <location>
        <begin position="27"/>
        <end position="36"/>
    </location>
</feature>
<feature type="sequence conflict" description="In Ref. 5; AAM64315." evidence="5" ref="5">
    <original>I</original>
    <variation>V</variation>
    <location>
        <position position="49"/>
    </location>
</feature>
<dbReference type="EMBL" id="Z97337">
    <property type="protein sequence ID" value="CAB10268.1"/>
    <property type="molecule type" value="Genomic_DNA"/>
</dbReference>
<dbReference type="EMBL" id="AL161540">
    <property type="protein sequence ID" value="CAB78531.1"/>
    <property type="molecule type" value="Genomic_DNA"/>
</dbReference>
<dbReference type="EMBL" id="CP002687">
    <property type="protein sequence ID" value="AEE83516.1"/>
    <property type="molecule type" value="Genomic_DNA"/>
</dbReference>
<dbReference type="EMBL" id="AY058112">
    <property type="protein sequence ID" value="AAL25529.1"/>
    <property type="molecule type" value="mRNA"/>
</dbReference>
<dbReference type="EMBL" id="AY101536">
    <property type="protein sequence ID" value="AAM26657.1"/>
    <property type="molecule type" value="mRNA"/>
</dbReference>
<dbReference type="EMBL" id="AY086239">
    <property type="protein sequence ID" value="AAM64315.1"/>
    <property type="molecule type" value="mRNA"/>
</dbReference>
<dbReference type="PIR" id="B71412">
    <property type="entry name" value="B71412"/>
</dbReference>
<dbReference type="RefSeq" id="NP_193225.1">
    <property type="nucleotide sequence ID" value="NM_117575.4"/>
</dbReference>
<dbReference type="SMR" id="O23344"/>
<dbReference type="FunCoup" id="O23344">
    <property type="interactions" value="215"/>
</dbReference>
<dbReference type="STRING" id="3702.O23344"/>
<dbReference type="PaxDb" id="3702-AT4G14890.1"/>
<dbReference type="ProteomicsDB" id="232075"/>
<dbReference type="EnsemblPlants" id="AT4G14890.1">
    <property type="protein sequence ID" value="AT4G14890.1"/>
    <property type="gene ID" value="AT4G14890"/>
</dbReference>
<dbReference type="GeneID" id="827146"/>
<dbReference type="Gramene" id="AT4G14890.1">
    <property type="protein sequence ID" value="AT4G14890.1"/>
    <property type="gene ID" value="AT4G14890"/>
</dbReference>
<dbReference type="KEGG" id="ath:AT4G14890"/>
<dbReference type="Araport" id="AT4G14890"/>
<dbReference type="TAIR" id="AT4G14890">
    <property type="gene designation" value="FDC1"/>
</dbReference>
<dbReference type="eggNOG" id="ENOG502RZRG">
    <property type="taxonomic scope" value="Eukaryota"/>
</dbReference>
<dbReference type="HOGENOM" id="CLU_082632_7_0_1"/>
<dbReference type="InParanoid" id="O23344"/>
<dbReference type="OMA" id="DCHIRTI"/>
<dbReference type="PhylomeDB" id="O23344"/>
<dbReference type="PRO" id="PR:O23344"/>
<dbReference type="Proteomes" id="UP000006548">
    <property type="component" value="Chromosome 4"/>
</dbReference>
<dbReference type="ExpressionAtlas" id="O23344">
    <property type="expression patterns" value="baseline and differential"/>
</dbReference>
<dbReference type="GO" id="GO:0009507">
    <property type="term" value="C:chloroplast"/>
    <property type="evidence" value="ECO:0000314"/>
    <property type="project" value="UniProtKB"/>
</dbReference>
<dbReference type="GO" id="GO:0051537">
    <property type="term" value="F:2 iron, 2 sulfur cluster binding"/>
    <property type="evidence" value="ECO:0000314"/>
    <property type="project" value="UniProtKB"/>
</dbReference>
<dbReference type="GO" id="GO:0009055">
    <property type="term" value="F:electron transfer activity"/>
    <property type="evidence" value="ECO:0000314"/>
    <property type="project" value="UniProtKB"/>
</dbReference>
<dbReference type="GO" id="GO:0046872">
    <property type="term" value="F:metal ion binding"/>
    <property type="evidence" value="ECO:0007669"/>
    <property type="project" value="UniProtKB-KW"/>
</dbReference>
<dbReference type="GO" id="GO:0022900">
    <property type="term" value="P:electron transport chain"/>
    <property type="evidence" value="ECO:0007669"/>
    <property type="project" value="InterPro"/>
</dbReference>
<dbReference type="GO" id="GO:0009644">
    <property type="term" value="P:response to high light intensity"/>
    <property type="evidence" value="ECO:0000270"/>
    <property type="project" value="UniProtKB"/>
</dbReference>
<dbReference type="CDD" id="cd00207">
    <property type="entry name" value="fer2"/>
    <property type="match status" value="1"/>
</dbReference>
<dbReference type="Gene3D" id="3.10.20.30">
    <property type="match status" value="1"/>
</dbReference>
<dbReference type="InterPro" id="IPR036010">
    <property type="entry name" value="2Fe-2S_ferredoxin-like_sf"/>
</dbReference>
<dbReference type="InterPro" id="IPR001041">
    <property type="entry name" value="2Fe-2S_ferredoxin-type"/>
</dbReference>
<dbReference type="InterPro" id="IPR012675">
    <property type="entry name" value="Beta-grasp_dom_sf"/>
</dbReference>
<dbReference type="InterPro" id="IPR010241">
    <property type="entry name" value="Fd_pln"/>
</dbReference>
<dbReference type="NCBIfam" id="TIGR02008">
    <property type="entry name" value="fdx_plant"/>
    <property type="match status" value="1"/>
</dbReference>
<dbReference type="PANTHER" id="PTHR43112">
    <property type="entry name" value="FERREDOXIN"/>
    <property type="match status" value="1"/>
</dbReference>
<dbReference type="PANTHER" id="PTHR43112:SF9">
    <property type="entry name" value="FERREDOXIN C 1, CHLOROPLASTIC"/>
    <property type="match status" value="1"/>
</dbReference>
<dbReference type="Pfam" id="PF00111">
    <property type="entry name" value="Fer2"/>
    <property type="match status" value="1"/>
</dbReference>
<dbReference type="SUPFAM" id="SSF54292">
    <property type="entry name" value="2Fe-2S ferredoxin-like"/>
    <property type="match status" value="1"/>
</dbReference>
<dbReference type="PROSITE" id="PS51085">
    <property type="entry name" value="2FE2S_FER_2"/>
    <property type="match status" value="1"/>
</dbReference>
<protein>
    <recommendedName>
        <fullName evidence="4">Ferredoxin C 1, chloroplastic</fullName>
        <shortName evidence="4">AtFdC1</shortName>
    </recommendedName>
</protein>
<organism>
    <name type="scientific">Arabidopsis thaliana</name>
    <name type="common">Mouse-ear cress</name>
    <dbReference type="NCBI Taxonomy" id="3702"/>
    <lineage>
        <taxon>Eukaryota</taxon>
        <taxon>Viridiplantae</taxon>
        <taxon>Streptophyta</taxon>
        <taxon>Embryophyta</taxon>
        <taxon>Tracheophyta</taxon>
        <taxon>Spermatophyta</taxon>
        <taxon>Magnoliopsida</taxon>
        <taxon>eudicotyledons</taxon>
        <taxon>Gunneridae</taxon>
        <taxon>Pentapetalae</taxon>
        <taxon>rosids</taxon>
        <taxon>malvids</taxon>
        <taxon>Brassicales</taxon>
        <taxon>Brassicaceae</taxon>
        <taxon>Camelineae</taxon>
        <taxon>Arabidopsis</taxon>
    </lineage>
</organism>
<keyword id="KW-0001">2Fe-2S</keyword>
<keyword id="KW-0150">Chloroplast</keyword>
<keyword id="KW-0249">Electron transport</keyword>
<keyword id="KW-0408">Iron</keyword>
<keyword id="KW-0411">Iron-sulfur</keyword>
<keyword id="KW-0479">Metal-binding</keyword>
<keyword id="KW-0934">Plastid</keyword>
<keyword id="KW-1185">Reference proteome</keyword>
<keyword id="KW-0809">Transit peptide</keyword>
<keyword id="KW-0813">Transport</keyword>
<proteinExistence type="evidence at protein level"/>
<name>FDC1_ARATH</name>
<sequence length="154" mass="16732">MATLPLPTQTSTISLPKPYLSNSFSFPLRNATLSTTTNRRNFLTTGRIIARAYKVVVEHDGKTTELEVEPDETILSKALDSGLDVPYDCNLGVCMTCPAKLVTGTVDQSGGMLSDDVVERGYTLLCASYPTSDCHIKMIPEEELLSLQLATAND</sequence>
<reference key="1">
    <citation type="journal article" date="1998" name="Nature">
        <title>Analysis of 1.9 Mb of contiguous sequence from chromosome 4 of Arabidopsis thaliana.</title>
        <authorList>
            <person name="Bevan M."/>
            <person name="Bancroft I."/>
            <person name="Bent E."/>
            <person name="Love K."/>
            <person name="Goodman H.M."/>
            <person name="Dean C."/>
            <person name="Bergkamp R."/>
            <person name="Dirkse W."/>
            <person name="van Staveren M."/>
            <person name="Stiekema W."/>
            <person name="Drost L."/>
            <person name="Ridley P."/>
            <person name="Hudson S.-A."/>
            <person name="Patel K."/>
            <person name="Murphy G."/>
            <person name="Piffanelli P."/>
            <person name="Wedler H."/>
            <person name="Wedler E."/>
            <person name="Wambutt R."/>
            <person name="Weitzenegger T."/>
            <person name="Pohl T."/>
            <person name="Terryn N."/>
            <person name="Gielen J."/>
            <person name="Villarroel R."/>
            <person name="De Clercq R."/>
            <person name="van Montagu M."/>
            <person name="Lecharny A."/>
            <person name="Aubourg S."/>
            <person name="Gy I."/>
            <person name="Kreis M."/>
            <person name="Lao N."/>
            <person name="Kavanagh T."/>
            <person name="Hempel S."/>
            <person name="Kotter P."/>
            <person name="Entian K.-D."/>
            <person name="Rieger M."/>
            <person name="Schaefer M."/>
            <person name="Funk B."/>
            <person name="Mueller-Auer S."/>
            <person name="Silvey M."/>
            <person name="James R."/>
            <person name="Monfort A."/>
            <person name="Pons A."/>
            <person name="Puigdomenech P."/>
            <person name="Douka A."/>
            <person name="Voukelatou E."/>
            <person name="Milioni D."/>
            <person name="Hatzopoulos P."/>
            <person name="Piravandi E."/>
            <person name="Obermaier B."/>
            <person name="Hilbert H."/>
            <person name="Duesterhoeft A."/>
            <person name="Moores T."/>
            <person name="Jones J.D.G."/>
            <person name="Eneva T."/>
            <person name="Palme K."/>
            <person name="Benes V."/>
            <person name="Rechmann S."/>
            <person name="Ansorge W."/>
            <person name="Cooke R."/>
            <person name="Berger C."/>
            <person name="Delseny M."/>
            <person name="Voet M."/>
            <person name="Volckaert G."/>
            <person name="Mewes H.-W."/>
            <person name="Klosterman S."/>
            <person name="Schueller C."/>
            <person name="Chalwatzis N."/>
        </authorList>
    </citation>
    <scope>NUCLEOTIDE SEQUENCE [LARGE SCALE GENOMIC DNA]</scope>
    <source>
        <strain>cv. Columbia</strain>
    </source>
</reference>
<reference key="2">
    <citation type="journal article" date="1999" name="Nature">
        <title>Sequence and analysis of chromosome 4 of the plant Arabidopsis thaliana.</title>
        <authorList>
            <person name="Mayer K.F.X."/>
            <person name="Schueller C."/>
            <person name="Wambutt R."/>
            <person name="Murphy G."/>
            <person name="Volckaert G."/>
            <person name="Pohl T."/>
            <person name="Duesterhoeft A."/>
            <person name="Stiekema W."/>
            <person name="Entian K.-D."/>
            <person name="Terryn N."/>
            <person name="Harris B."/>
            <person name="Ansorge W."/>
            <person name="Brandt P."/>
            <person name="Grivell L.A."/>
            <person name="Rieger M."/>
            <person name="Weichselgartner M."/>
            <person name="de Simone V."/>
            <person name="Obermaier B."/>
            <person name="Mache R."/>
            <person name="Mueller M."/>
            <person name="Kreis M."/>
            <person name="Delseny M."/>
            <person name="Puigdomenech P."/>
            <person name="Watson M."/>
            <person name="Schmidtheini T."/>
            <person name="Reichert B."/>
            <person name="Portetelle D."/>
            <person name="Perez-Alonso M."/>
            <person name="Boutry M."/>
            <person name="Bancroft I."/>
            <person name="Vos P."/>
            <person name="Hoheisel J."/>
            <person name="Zimmermann W."/>
            <person name="Wedler H."/>
            <person name="Ridley P."/>
            <person name="Langham S.-A."/>
            <person name="McCullagh B."/>
            <person name="Bilham L."/>
            <person name="Robben J."/>
            <person name="van der Schueren J."/>
            <person name="Grymonprez B."/>
            <person name="Chuang Y.-J."/>
            <person name="Vandenbussche F."/>
            <person name="Braeken M."/>
            <person name="Weltjens I."/>
            <person name="Voet M."/>
            <person name="Bastiaens I."/>
            <person name="Aert R."/>
            <person name="Defoor E."/>
            <person name="Weitzenegger T."/>
            <person name="Bothe G."/>
            <person name="Ramsperger U."/>
            <person name="Hilbert H."/>
            <person name="Braun M."/>
            <person name="Holzer E."/>
            <person name="Brandt A."/>
            <person name="Peters S."/>
            <person name="van Staveren M."/>
            <person name="Dirkse W."/>
            <person name="Mooijman P."/>
            <person name="Klein Lankhorst R."/>
            <person name="Rose M."/>
            <person name="Hauf J."/>
            <person name="Koetter P."/>
            <person name="Berneiser S."/>
            <person name="Hempel S."/>
            <person name="Feldpausch M."/>
            <person name="Lamberth S."/>
            <person name="Van den Daele H."/>
            <person name="De Keyser A."/>
            <person name="Buysshaert C."/>
            <person name="Gielen J."/>
            <person name="Villarroel R."/>
            <person name="De Clercq R."/>
            <person name="van Montagu M."/>
            <person name="Rogers J."/>
            <person name="Cronin A."/>
            <person name="Quail M.A."/>
            <person name="Bray-Allen S."/>
            <person name="Clark L."/>
            <person name="Doggett J."/>
            <person name="Hall S."/>
            <person name="Kay M."/>
            <person name="Lennard N."/>
            <person name="McLay K."/>
            <person name="Mayes R."/>
            <person name="Pettett A."/>
            <person name="Rajandream M.A."/>
            <person name="Lyne M."/>
            <person name="Benes V."/>
            <person name="Rechmann S."/>
            <person name="Borkova D."/>
            <person name="Bloecker H."/>
            <person name="Scharfe M."/>
            <person name="Grimm M."/>
            <person name="Loehnert T.-H."/>
            <person name="Dose S."/>
            <person name="de Haan M."/>
            <person name="Maarse A.C."/>
            <person name="Schaefer M."/>
            <person name="Mueller-Auer S."/>
            <person name="Gabel C."/>
            <person name="Fuchs M."/>
            <person name="Fartmann B."/>
            <person name="Granderath K."/>
            <person name="Dauner D."/>
            <person name="Herzl A."/>
            <person name="Neumann S."/>
            <person name="Argiriou A."/>
            <person name="Vitale D."/>
            <person name="Liguori R."/>
            <person name="Piravandi E."/>
            <person name="Massenet O."/>
            <person name="Quigley F."/>
            <person name="Clabauld G."/>
            <person name="Muendlein A."/>
            <person name="Felber R."/>
            <person name="Schnabl S."/>
            <person name="Hiller R."/>
            <person name="Schmidt W."/>
            <person name="Lecharny A."/>
            <person name="Aubourg S."/>
            <person name="Chefdor F."/>
            <person name="Cooke R."/>
            <person name="Berger C."/>
            <person name="Monfort A."/>
            <person name="Casacuberta E."/>
            <person name="Gibbons T."/>
            <person name="Weber N."/>
            <person name="Vandenbol M."/>
            <person name="Bargues M."/>
            <person name="Terol J."/>
            <person name="Torres A."/>
            <person name="Perez-Perez A."/>
            <person name="Purnelle B."/>
            <person name="Bent E."/>
            <person name="Johnson S."/>
            <person name="Tacon D."/>
            <person name="Jesse T."/>
            <person name="Heijnen L."/>
            <person name="Schwarz S."/>
            <person name="Scholler P."/>
            <person name="Heber S."/>
            <person name="Francs P."/>
            <person name="Bielke C."/>
            <person name="Frishman D."/>
            <person name="Haase D."/>
            <person name="Lemcke K."/>
            <person name="Mewes H.-W."/>
            <person name="Stocker S."/>
            <person name="Zaccaria P."/>
            <person name="Bevan M."/>
            <person name="Wilson R.K."/>
            <person name="de la Bastide M."/>
            <person name="Habermann K."/>
            <person name="Parnell L."/>
            <person name="Dedhia N."/>
            <person name="Gnoj L."/>
            <person name="Schutz K."/>
            <person name="Huang E."/>
            <person name="Spiegel L."/>
            <person name="Sekhon M."/>
            <person name="Murray J."/>
            <person name="Sheet P."/>
            <person name="Cordes M."/>
            <person name="Abu-Threideh J."/>
            <person name="Stoneking T."/>
            <person name="Kalicki J."/>
            <person name="Graves T."/>
            <person name="Harmon G."/>
            <person name="Edwards J."/>
            <person name="Latreille P."/>
            <person name="Courtney L."/>
            <person name="Cloud J."/>
            <person name="Abbott A."/>
            <person name="Scott K."/>
            <person name="Johnson D."/>
            <person name="Minx P."/>
            <person name="Bentley D."/>
            <person name="Fulton B."/>
            <person name="Miller N."/>
            <person name="Greco T."/>
            <person name="Kemp K."/>
            <person name="Kramer J."/>
            <person name="Fulton L."/>
            <person name="Mardis E."/>
            <person name="Dante M."/>
            <person name="Pepin K."/>
            <person name="Hillier L.W."/>
            <person name="Nelson J."/>
            <person name="Spieth J."/>
            <person name="Ryan E."/>
            <person name="Andrews S."/>
            <person name="Geisel C."/>
            <person name="Layman D."/>
            <person name="Du H."/>
            <person name="Ali J."/>
            <person name="Berghoff A."/>
            <person name="Jones K."/>
            <person name="Drone K."/>
            <person name="Cotton M."/>
            <person name="Joshu C."/>
            <person name="Antonoiu B."/>
            <person name="Zidanic M."/>
            <person name="Strong C."/>
            <person name="Sun H."/>
            <person name="Lamar B."/>
            <person name="Yordan C."/>
            <person name="Ma P."/>
            <person name="Zhong J."/>
            <person name="Preston R."/>
            <person name="Vil D."/>
            <person name="Shekher M."/>
            <person name="Matero A."/>
            <person name="Shah R."/>
            <person name="Swaby I.K."/>
            <person name="O'Shaughnessy A."/>
            <person name="Rodriguez M."/>
            <person name="Hoffman J."/>
            <person name="Till S."/>
            <person name="Granat S."/>
            <person name="Shohdy N."/>
            <person name="Hasegawa A."/>
            <person name="Hameed A."/>
            <person name="Lodhi M."/>
            <person name="Johnson A."/>
            <person name="Chen E."/>
            <person name="Marra M.A."/>
            <person name="Martienssen R."/>
            <person name="McCombie W.R."/>
        </authorList>
    </citation>
    <scope>NUCLEOTIDE SEQUENCE [LARGE SCALE GENOMIC DNA]</scope>
    <source>
        <strain>cv. Columbia</strain>
    </source>
</reference>
<reference key="3">
    <citation type="journal article" date="2017" name="Plant J.">
        <title>Araport11: a complete reannotation of the Arabidopsis thaliana reference genome.</title>
        <authorList>
            <person name="Cheng C.Y."/>
            <person name="Krishnakumar V."/>
            <person name="Chan A.P."/>
            <person name="Thibaud-Nissen F."/>
            <person name="Schobel S."/>
            <person name="Town C.D."/>
        </authorList>
    </citation>
    <scope>GENOME REANNOTATION</scope>
    <source>
        <strain>cv. Columbia</strain>
    </source>
</reference>
<reference key="4">
    <citation type="journal article" date="2003" name="Science">
        <title>Empirical analysis of transcriptional activity in the Arabidopsis genome.</title>
        <authorList>
            <person name="Yamada K."/>
            <person name="Lim J."/>
            <person name="Dale J.M."/>
            <person name="Chen H."/>
            <person name="Shinn P."/>
            <person name="Palm C.J."/>
            <person name="Southwick A.M."/>
            <person name="Wu H.C."/>
            <person name="Kim C.J."/>
            <person name="Nguyen M."/>
            <person name="Pham P.K."/>
            <person name="Cheuk R.F."/>
            <person name="Karlin-Newmann G."/>
            <person name="Liu S.X."/>
            <person name="Lam B."/>
            <person name="Sakano H."/>
            <person name="Wu T."/>
            <person name="Yu G."/>
            <person name="Miranda M."/>
            <person name="Quach H.L."/>
            <person name="Tripp M."/>
            <person name="Chang C.H."/>
            <person name="Lee J.M."/>
            <person name="Toriumi M.J."/>
            <person name="Chan M.M."/>
            <person name="Tang C.C."/>
            <person name="Onodera C.S."/>
            <person name="Deng J.M."/>
            <person name="Akiyama K."/>
            <person name="Ansari Y."/>
            <person name="Arakawa T."/>
            <person name="Banh J."/>
            <person name="Banno F."/>
            <person name="Bowser L."/>
            <person name="Brooks S.Y."/>
            <person name="Carninci P."/>
            <person name="Chao Q."/>
            <person name="Choy N."/>
            <person name="Enju A."/>
            <person name="Goldsmith A.D."/>
            <person name="Gurjal M."/>
            <person name="Hansen N.F."/>
            <person name="Hayashizaki Y."/>
            <person name="Johnson-Hopson C."/>
            <person name="Hsuan V.W."/>
            <person name="Iida K."/>
            <person name="Karnes M."/>
            <person name="Khan S."/>
            <person name="Koesema E."/>
            <person name="Ishida J."/>
            <person name="Jiang P.X."/>
            <person name="Jones T."/>
            <person name="Kawai J."/>
            <person name="Kamiya A."/>
            <person name="Meyers C."/>
            <person name="Nakajima M."/>
            <person name="Narusaka M."/>
            <person name="Seki M."/>
            <person name="Sakurai T."/>
            <person name="Satou M."/>
            <person name="Tamse R."/>
            <person name="Vaysberg M."/>
            <person name="Wallender E.K."/>
            <person name="Wong C."/>
            <person name="Yamamura Y."/>
            <person name="Yuan S."/>
            <person name="Shinozaki K."/>
            <person name="Davis R.W."/>
            <person name="Theologis A."/>
            <person name="Ecker J.R."/>
        </authorList>
    </citation>
    <scope>NUCLEOTIDE SEQUENCE [LARGE SCALE MRNA]</scope>
    <source>
        <strain>cv. Columbia</strain>
    </source>
</reference>
<reference key="5">
    <citation type="submission" date="2002-03" db="EMBL/GenBank/DDBJ databases">
        <title>Full-length cDNA from Arabidopsis thaliana.</title>
        <authorList>
            <person name="Brover V.V."/>
            <person name="Troukhan M.E."/>
            <person name="Alexandrov N.A."/>
            <person name="Lu Y.-P."/>
            <person name="Flavell R.B."/>
            <person name="Feldmann K.A."/>
        </authorList>
    </citation>
    <scope>NUCLEOTIDE SEQUENCE [LARGE SCALE MRNA]</scope>
</reference>
<reference key="6">
    <citation type="journal article" date="2004" name="Plant Physiol.">
        <title>A post genomic characterization of Arabidopsis ferredoxins.</title>
        <authorList>
            <person name="Hanke G.T."/>
            <person name="Kimata-Ariga Y."/>
            <person name="Taniguchi I."/>
            <person name="Hase T."/>
        </authorList>
    </citation>
    <scope>GENE FAMILY</scope>
</reference>
<reference key="7">
    <citation type="journal article" date="2011" name="J. Biol. Chem.">
        <title>FdC1, a novel ferredoxin protein capable of alternative electron partitioning, increases in conditions of acceptor limitation at photosystem I.</title>
        <authorList>
            <person name="Voss I."/>
            <person name="Goss T."/>
            <person name="Murozuka E."/>
            <person name="Altmann B."/>
            <person name="McLean K.J."/>
            <person name="Rigby S.E.J."/>
            <person name="Munro A.W."/>
            <person name="Scheibe R."/>
            <person name="Hase T."/>
            <person name="Hanke G.T."/>
        </authorList>
    </citation>
    <scope>FUNCTION</scope>
    <scope>BIOPHYSICOCHEMICAL PROPERTIES</scope>
    <scope>INDUCTION BY HIGH LIGHT</scope>
    <scope>SUBCELLULAR LOCATION</scope>
    <scope>COFACTOR</scope>
    <scope>NOMENCLATURE</scope>
    <source>
        <strain>cv. Columbia</strain>
        <strain>cv. No-0</strain>
    </source>
</reference>
<gene>
    <name evidence="4" type="primary">FDC1</name>
    <name evidence="6" type="ordered locus">At4g14890</name>
    <name evidence="7" type="ORF">dl3485w</name>
    <name evidence="8" type="ORF">FCAALL.7</name>
</gene>